<organism>
    <name type="scientific">Mus musculus</name>
    <name type="common">Mouse</name>
    <dbReference type="NCBI Taxonomy" id="10090"/>
    <lineage>
        <taxon>Eukaryota</taxon>
        <taxon>Metazoa</taxon>
        <taxon>Chordata</taxon>
        <taxon>Craniata</taxon>
        <taxon>Vertebrata</taxon>
        <taxon>Euteleostomi</taxon>
        <taxon>Mammalia</taxon>
        <taxon>Eutheria</taxon>
        <taxon>Euarchontoglires</taxon>
        <taxon>Glires</taxon>
        <taxon>Rodentia</taxon>
        <taxon>Myomorpha</taxon>
        <taxon>Muroidea</taxon>
        <taxon>Muridae</taxon>
        <taxon>Murinae</taxon>
        <taxon>Mus</taxon>
        <taxon>Mus</taxon>
    </lineage>
</organism>
<dbReference type="EMBL" id="AF531873">
    <property type="protein sequence ID" value="AAQ10071.1"/>
    <property type="molecule type" value="mRNA"/>
</dbReference>
<dbReference type="EMBL" id="AY303976">
    <property type="protein sequence ID" value="AAQ73496.1"/>
    <property type="molecule type" value="Genomic_DNA"/>
</dbReference>
<dbReference type="EMBL" id="AK018379">
    <property type="protein sequence ID" value="BAE43251.1"/>
    <property type="molecule type" value="mRNA"/>
</dbReference>
<dbReference type="EMBL" id="AK053044">
    <property type="protein sequence ID" value="BAC35248.1"/>
    <property type="molecule type" value="mRNA"/>
</dbReference>
<dbReference type="EMBL" id="AK163135">
    <property type="protein sequence ID" value="BAE37208.1"/>
    <property type="molecule type" value="mRNA"/>
</dbReference>
<dbReference type="EMBL" id="BC027800">
    <property type="protein sequence ID" value="AAH27800.1"/>
    <property type="status" value="ALT_INIT"/>
    <property type="molecule type" value="mRNA"/>
</dbReference>
<dbReference type="EMBL" id="BC076578">
    <property type="protein sequence ID" value="AAH76578.1"/>
    <property type="molecule type" value="mRNA"/>
</dbReference>
<dbReference type="EMBL" id="AB055408">
    <property type="protein sequence ID" value="BAC53806.1"/>
    <property type="molecule type" value="mRNA"/>
</dbReference>
<dbReference type="CCDS" id="CCDS37637.1"/>
<dbReference type="RefSeq" id="NP_780377.1">
    <property type="nucleotide sequence ID" value="NM_175168.4"/>
</dbReference>
<dbReference type="SMR" id="Q8BKG3"/>
<dbReference type="BioGRID" id="214723">
    <property type="interactions" value="55"/>
</dbReference>
<dbReference type="CORUM" id="Q8BKG3"/>
<dbReference type="FunCoup" id="Q8BKG3">
    <property type="interactions" value="604"/>
</dbReference>
<dbReference type="IntAct" id="Q8BKG3">
    <property type="interactions" value="1"/>
</dbReference>
<dbReference type="STRING" id="10090.ENSMUSP00000043703"/>
<dbReference type="GlyConnect" id="2391">
    <property type="glycosylation" value="1 N-Linked glycan (2 sites)"/>
</dbReference>
<dbReference type="GlyCosmos" id="Q8BKG3">
    <property type="glycosylation" value="10 sites, 1 glycan"/>
</dbReference>
<dbReference type="GlyGen" id="Q8BKG3">
    <property type="glycosylation" value="11 sites, 7 N-linked glycans (7 sites)"/>
</dbReference>
<dbReference type="iPTMnet" id="Q8BKG3"/>
<dbReference type="PhosphoSitePlus" id="Q8BKG3"/>
<dbReference type="SwissPalm" id="Q8BKG3"/>
<dbReference type="CPTAC" id="non-CPTAC-3932"/>
<dbReference type="PaxDb" id="10090-ENSMUSP00000043703"/>
<dbReference type="PeptideAtlas" id="Q8BKG3"/>
<dbReference type="ProteomicsDB" id="301934"/>
<dbReference type="Pumba" id="Q8BKG3"/>
<dbReference type="Antibodypedia" id="1008">
    <property type="antibodies" value="613 antibodies from 38 providers"/>
</dbReference>
<dbReference type="DNASU" id="71461"/>
<dbReference type="Ensembl" id="ENSMUST00000044442.10">
    <property type="protein sequence ID" value="ENSMUSP00000043703.9"/>
    <property type="gene ID" value="ENSMUSG00000023972.11"/>
</dbReference>
<dbReference type="GeneID" id="71461"/>
<dbReference type="KEGG" id="mmu:71461"/>
<dbReference type="UCSC" id="uc008cth.2">
    <property type="organism name" value="mouse"/>
</dbReference>
<dbReference type="AGR" id="MGI:1918711"/>
<dbReference type="CTD" id="5754"/>
<dbReference type="MGI" id="MGI:1918711">
    <property type="gene designation" value="Ptk7"/>
</dbReference>
<dbReference type="VEuPathDB" id="HostDB:ENSMUSG00000023972"/>
<dbReference type="eggNOG" id="KOG1026">
    <property type="taxonomic scope" value="Eukaryota"/>
</dbReference>
<dbReference type="eggNOG" id="KOG4475">
    <property type="taxonomic scope" value="Eukaryota"/>
</dbReference>
<dbReference type="GeneTree" id="ENSGT00940000157908"/>
<dbReference type="HOGENOM" id="CLU_012268_0_0_1"/>
<dbReference type="InParanoid" id="Q8BKG3"/>
<dbReference type="OMA" id="WWERNHE"/>
<dbReference type="PhylomeDB" id="Q8BKG3"/>
<dbReference type="TreeFam" id="TF326835"/>
<dbReference type="BioGRID-ORCS" id="71461">
    <property type="hits" value="0 hits in 80 CRISPR screens"/>
</dbReference>
<dbReference type="ChiTaRS" id="Ptk7">
    <property type="organism name" value="mouse"/>
</dbReference>
<dbReference type="PRO" id="PR:Q8BKG3"/>
<dbReference type="Proteomes" id="UP000000589">
    <property type="component" value="Chromosome 17"/>
</dbReference>
<dbReference type="RNAct" id="Q8BKG3">
    <property type="molecule type" value="protein"/>
</dbReference>
<dbReference type="Bgee" id="ENSMUSG00000023972">
    <property type="expression patterns" value="Expressed in embryonic post-anal tail and 128 other cell types or tissues"/>
</dbReference>
<dbReference type="GO" id="GO:0005911">
    <property type="term" value="C:cell-cell junction"/>
    <property type="evidence" value="ECO:0000314"/>
    <property type="project" value="MGI"/>
</dbReference>
<dbReference type="GO" id="GO:0005829">
    <property type="term" value="C:cytosol"/>
    <property type="evidence" value="ECO:0007669"/>
    <property type="project" value="Ensembl"/>
</dbReference>
<dbReference type="GO" id="GO:0043231">
    <property type="term" value="C:intracellular membrane-bounded organelle"/>
    <property type="evidence" value="ECO:0007669"/>
    <property type="project" value="Ensembl"/>
</dbReference>
<dbReference type="GO" id="GO:0016020">
    <property type="term" value="C:membrane"/>
    <property type="evidence" value="ECO:0000314"/>
    <property type="project" value="MGI"/>
</dbReference>
<dbReference type="GO" id="GO:0005886">
    <property type="term" value="C:plasma membrane"/>
    <property type="evidence" value="ECO:0000314"/>
    <property type="project" value="MGI"/>
</dbReference>
<dbReference type="GO" id="GO:0030036">
    <property type="term" value="P:actin cytoskeleton organization"/>
    <property type="evidence" value="ECO:0007669"/>
    <property type="project" value="Ensembl"/>
</dbReference>
<dbReference type="GO" id="GO:0003401">
    <property type="term" value="P:axis elongation"/>
    <property type="evidence" value="ECO:0000315"/>
    <property type="project" value="MGI"/>
</dbReference>
<dbReference type="GO" id="GO:0007155">
    <property type="term" value="P:cell adhesion"/>
    <property type="evidence" value="ECO:0007669"/>
    <property type="project" value="UniProtKB-KW"/>
</dbReference>
<dbReference type="GO" id="GO:0016477">
    <property type="term" value="P:cell migration"/>
    <property type="evidence" value="ECO:0007669"/>
    <property type="project" value="Ensembl"/>
</dbReference>
<dbReference type="GO" id="GO:0071300">
    <property type="term" value="P:cellular response to retinoic acid"/>
    <property type="evidence" value="ECO:0007669"/>
    <property type="project" value="Ensembl"/>
</dbReference>
<dbReference type="GO" id="GO:0090103">
    <property type="term" value="P:cochlea morphogenesis"/>
    <property type="evidence" value="ECO:0000315"/>
    <property type="project" value="MGI"/>
</dbReference>
<dbReference type="GO" id="GO:0060026">
    <property type="term" value="P:convergent extension"/>
    <property type="evidence" value="ECO:0000315"/>
    <property type="project" value="MGI"/>
</dbReference>
<dbReference type="GO" id="GO:0060976">
    <property type="term" value="P:coronary vasculature development"/>
    <property type="evidence" value="ECO:0000315"/>
    <property type="project" value="MGI"/>
</dbReference>
<dbReference type="GO" id="GO:0045198">
    <property type="term" value="P:establishment of epithelial cell apical/basal polarity"/>
    <property type="evidence" value="ECO:0000315"/>
    <property type="project" value="MGI"/>
</dbReference>
<dbReference type="GO" id="GO:0001736">
    <property type="term" value="P:establishment of planar polarity"/>
    <property type="evidence" value="ECO:0000315"/>
    <property type="project" value="MGI"/>
</dbReference>
<dbReference type="GO" id="GO:0007507">
    <property type="term" value="P:heart development"/>
    <property type="evidence" value="ECO:0000315"/>
    <property type="project" value="MGI"/>
</dbReference>
<dbReference type="GO" id="GO:0001822">
    <property type="term" value="P:kidney development"/>
    <property type="evidence" value="ECO:0000315"/>
    <property type="project" value="MGI"/>
</dbReference>
<dbReference type="GO" id="GO:0060484">
    <property type="term" value="P:lung-associated mesenchyme development"/>
    <property type="evidence" value="ECO:0000315"/>
    <property type="project" value="MGI"/>
</dbReference>
<dbReference type="GO" id="GO:0001843">
    <property type="term" value="P:neural tube closure"/>
    <property type="evidence" value="ECO:0000315"/>
    <property type="project" value="MGI"/>
</dbReference>
<dbReference type="GO" id="GO:0090263">
    <property type="term" value="P:positive regulation of canonical Wnt signaling pathway"/>
    <property type="evidence" value="ECO:0007669"/>
    <property type="project" value="Ensembl"/>
</dbReference>
<dbReference type="GO" id="GO:0010976">
    <property type="term" value="P:positive regulation of neuron projection development"/>
    <property type="evidence" value="ECO:0007669"/>
    <property type="project" value="Ensembl"/>
</dbReference>
<dbReference type="GO" id="GO:0003281">
    <property type="term" value="P:ventricular septum development"/>
    <property type="evidence" value="ECO:0000315"/>
    <property type="project" value="MGI"/>
</dbReference>
<dbReference type="GO" id="GO:0016055">
    <property type="term" value="P:Wnt signaling pathway"/>
    <property type="evidence" value="ECO:0007669"/>
    <property type="project" value="UniProtKB-KW"/>
</dbReference>
<dbReference type="GO" id="GO:0042060">
    <property type="term" value="P:wound healing"/>
    <property type="evidence" value="ECO:0000316"/>
    <property type="project" value="MGI"/>
</dbReference>
<dbReference type="CDD" id="cd00096">
    <property type="entry name" value="Ig"/>
    <property type="match status" value="1"/>
</dbReference>
<dbReference type="CDD" id="cd05760">
    <property type="entry name" value="Ig2_PTK7"/>
    <property type="match status" value="1"/>
</dbReference>
<dbReference type="CDD" id="cd05046">
    <property type="entry name" value="PTK_CCK4"/>
    <property type="match status" value="1"/>
</dbReference>
<dbReference type="FunFam" id="1.10.510.10:FF:000200">
    <property type="entry name" value="inactive tyrosine-protein kinase 7"/>
    <property type="match status" value="1"/>
</dbReference>
<dbReference type="FunFam" id="2.60.40.10:FF:000341">
    <property type="entry name" value="inactive tyrosine-protein kinase 7"/>
    <property type="match status" value="1"/>
</dbReference>
<dbReference type="FunFam" id="2.60.40.10:FF:000343">
    <property type="entry name" value="inactive tyrosine-protein kinase 7"/>
    <property type="match status" value="1"/>
</dbReference>
<dbReference type="FunFam" id="2.60.40.10:FF:000377">
    <property type="entry name" value="Protein tyrosine kinase 7 (inactive)"/>
    <property type="match status" value="1"/>
</dbReference>
<dbReference type="FunFam" id="2.60.40.10:FF:000390">
    <property type="entry name" value="Protein tyrosine kinase 7 (inactive)"/>
    <property type="match status" value="1"/>
</dbReference>
<dbReference type="FunFam" id="2.60.40.10:FF:000395">
    <property type="entry name" value="Protein tyrosine kinase 7 (inactive)"/>
    <property type="match status" value="1"/>
</dbReference>
<dbReference type="FunFam" id="2.60.40.10:FF:000402">
    <property type="entry name" value="Protein tyrosine kinase 7 (inactive)"/>
    <property type="match status" value="1"/>
</dbReference>
<dbReference type="FunFam" id="2.60.40.10:FF:000432">
    <property type="entry name" value="Protein tyrosine kinase 7 (inactive)"/>
    <property type="match status" value="1"/>
</dbReference>
<dbReference type="FunFam" id="3.30.200.20:FF:000167">
    <property type="entry name" value="Putative inactive tyrosine-protein kinase 7"/>
    <property type="match status" value="1"/>
</dbReference>
<dbReference type="Gene3D" id="2.60.40.10">
    <property type="entry name" value="Immunoglobulins"/>
    <property type="match status" value="7"/>
</dbReference>
<dbReference type="Gene3D" id="3.30.200.20">
    <property type="entry name" value="Phosphorylase Kinase, domain 1"/>
    <property type="match status" value="1"/>
</dbReference>
<dbReference type="Gene3D" id="1.10.510.10">
    <property type="entry name" value="Transferase(Phosphotransferase) domain 1"/>
    <property type="match status" value="1"/>
</dbReference>
<dbReference type="InterPro" id="IPR050958">
    <property type="entry name" value="Cell_Adh-Cytoskel_Orgn"/>
</dbReference>
<dbReference type="InterPro" id="IPR007110">
    <property type="entry name" value="Ig-like_dom"/>
</dbReference>
<dbReference type="InterPro" id="IPR036179">
    <property type="entry name" value="Ig-like_dom_sf"/>
</dbReference>
<dbReference type="InterPro" id="IPR013783">
    <property type="entry name" value="Ig-like_fold"/>
</dbReference>
<dbReference type="InterPro" id="IPR013098">
    <property type="entry name" value="Ig_I-set"/>
</dbReference>
<dbReference type="InterPro" id="IPR003599">
    <property type="entry name" value="Ig_sub"/>
</dbReference>
<dbReference type="InterPro" id="IPR003598">
    <property type="entry name" value="Ig_sub2"/>
</dbReference>
<dbReference type="InterPro" id="IPR013106">
    <property type="entry name" value="Ig_V-set"/>
</dbReference>
<dbReference type="InterPro" id="IPR011009">
    <property type="entry name" value="Kinase-like_dom_sf"/>
</dbReference>
<dbReference type="InterPro" id="IPR000719">
    <property type="entry name" value="Prot_kinase_dom"/>
</dbReference>
<dbReference type="InterPro" id="IPR001245">
    <property type="entry name" value="Ser-Thr/Tyr_kinase_cat_dom"/>
</dbReference>
<dbReference type="InterPro" id="IPR008266">
    <property type="entry name" value="Tyr_kinase_AS"/>
</dbReference>
<dbReference type="PANTHER" id="PTHR45080">
    <property type="entry name" value="CONTACTIN 5"/>
    <property type="match status" value="1"/>
</dbReference>
<dbReference type="PANTHER" id="PTHR45080:SF21">
    <property type="entry name" value="INACTIVE TYROSINE-PROTEIN KINASE 7"/>
    <property type="match status" value="1"/>
</dbReference>
<dbReference type="Pfam" id="PF07679">
    <property type="entry name" value="I-set"/>
    <property type="match status" value="2"/>
</dbReference>
<dbReference type="Pfam" id="PF13927">
    <property type="entry name" value="Ig_3"/>
    <property type="match status" value="5"/>
</dbReference>
<dbReference type="Pfam" id="PF07714">
    <property type="entry name" value="PK_Tyr_Ser-Thr"/>
    <property type="match status" value="1"/>
</dbReference>
<dbReference type="PRINTS" id="PR00109">
    <property type="entry name" value="TYRKINASE"/>
</dbReference>
<dbReference type="SMART" id="SM00409">
    <property type="entry name" value="IG"/>
    <property type="match status" value="7"/>
</dbReference>
<dbReference type="SMART" id="SM00408">
    <property type="entry name" value="IGc2"/>
    <property type="match status" value="7"/>
</dbReference>
<dbReference type="SMART" id="SM00406">
    <property type="entry name" value="IGv"/>
    <property type="match status" value="2"/>
</dbReference>
<dbReference type="SUPFAM" id="SSF48726">
    <property type="entry name" value="Immunoglobulin"/>
    <property type="match status" value="6"/>
</dbReference>
<dbReference type="SUPFAM" id="SSF56112">
    <property type="entry name" value="Protein kinase-like (PK-like)"/>
    <property type="match status" value="1"/>
</dbReference>
<dbReference type="PROSITE" id="PS50835">
    <property type="entry name" value="IG_LIKE"/>
    <property type="match status" value="7"/>
</dbReference>
<dbReference type="PROSITE" id="PS50011">
    <property type="entry name" value="PROTEIN_KINASE_DOM"/>
    <property type="match status" value="1"/>
</dbReference>
<dbReference type="PROSITE" id="PS00109">
    <property type="entry name" value="PROTEIN_KINASE_TYR"/>
    <property type="match status" value="1"/>
</dbReference>
<protein>
    <recommendedName>
        <fullName>Inactive tyrosine-protein kinase 7</fullName>
    </recommendedName>
    <alternativeName>
        <fullName>Protein chuzhoi</fullName>
    </alternativeName>
    <alternativeName>
        <fullName>Protein-tyrosine kinase 7</fullName>
    </alternativeName>
    <alternativeName>
        <fullName>Pseudo tyrosine kinase receptor 7</fullName>
    </alternativeName>
    <alternativeName>
        <fullName>Tyrosine-protein kinase-like 7</fullName>
    </alternativeName>
</protein>
<keyword id="KW-0130">Cell adhesion</keyword>
<keyword id="KW-0965">Cell junction</keyword>
<keyword id="KW-1015">Disulfide bond</keyword>
<keyword id="KW-0325">Glycoprotein</keyword>
<keyword id="KW-0393">Immunoglobulin domain</keyword>
<keyword id="KW-0472">Membrane</keyword>
<keyword id="KW-0597">Phosphoprotein</keyword>
<keyword id="KW-0675">Receptor</keyword>
<keyword id="KW-1185">Reference proteome</keyword>
<keyword id="KW-0677">Repeat</keyword>
<keyword id="KW-0732">Signal</keyword>
<keyword id="KW-0812">Transmembrane</keyword>
<keyword id="KW-1133">Transmembrane helix</keyword>
<keyword id="KW-0879">Wnt signaling pathway</keyword>
<feature type="signal peptide" evidence="2">
    <location>
        <begin position="1"/>
        <end position="22"/>
    </location>
</feature>
<feature type="chain" id="PRO_0000260435" description="Inactive tyrosine-protein kinase 7">
    <location>
        <begin position="23"/>
        <end position="1062"/>
    </location>
</feature>
<feature type="topological domain" description="Extracellular" evidence="2">
    <location>
        <begin position="23"/>
        <end position="696"/>
    </location>
</feature>
<feature type="transmembrane region" description="Helical" evidence="2">
    <location>
        <begin position="697"/>
        <end position="717"/>
    </location>
</feature>
<feature type="topological domain" description="Cytoplasmic" evidence="2">
    <location>
        <begin position="718"/>
        <end position="1062"/>
    </location>
</feature>
<feature type="domain" description="Ig-like C2-type 1">
    <location>
        <begin position="23"/>
        <end position="112"/>
    </location>
</feature>
<feature type="domain" description="Ig-like C2-type 2">
    <location>
        <begin position="120"/>
        <end position="210"/>
    </location>
</feature>
<feature type="domain" description="Ig-like C2-type 3">
    <location>
        <begin position="217"/>
        <end position="309"/>
    </location>
</feature>
<feature type="domain" description="Ig-like C2-type 4">
    <location>
        <begin position="301"/>
        <end position="399"/>
    </location>
</feature>
<feature type="domain" description="Ig-like C2-type 5">
    <location>
        <begin position="404"/>
        <end position="489"/>
    </location>
</feature>
<feature type="domain" description="Ig-like C2-type 6">
    <location>
        <begin position="495"/>
        <end position="578"/>
    </location>
</feature>
<feature type="domain" description="Ig-like C2-type 7">
    <location>
        <begin position="570"/>
        <end position="672"/>
    </location>
</feature>
<feature type="domain" description="Protein kinase; inactive" evidence="4">
    <location>
        <begin position="788"/>
        <end position="1058"/>
    </location>
</feature>
<feature type="region of interest" description="Disordered" evidence="5">
    <location>
        <begin position="728"/>
        <end position="750"/>
    </location>
</feature>
<feature type="region of interest" description="Interaction with CTNNB1" evidence="1">
    <location>
        <begin position="786"/>
        <end position="1062"/>
    </location>
</feature>
<feature type="region of interest" description="Disordered" evidence="5">
    <location>
        <begin position="1039"/>
        <end position="1062"/>
    </location>
</feature>
<feature type="site" description="Cleavage; by MMP14" evidence="1">
    <location>
        <begin position="613"/>
        <end position="614"/>
    </location>
</feature>
<feature type="modified residue" description="Phosphoserine" evidence="13">
    <location>
        <position position="1056"/>
    </location>
</feature>
<feature type="glycosylation site" description="N-linked (GlcNAc...) asparagine" evidence="8">
    <location>
        <position position="98"/>
    </location>
</feature>
<feature type="glycosylation site" description="N-linked (GlcNAc...) asparagine" evidence="10">
    <location>
        <position position="108"/>
    </location>
</feature>
<feature type="glycosylation site" description="N-linked (GlcNAc...) asparagine" evidence="2">
    <location>
        <position position="176"/>
    </location>
</feature>
<feature type="glycosylation site" description="N-linked (GlcNAc...) asparagine" evidence="2">
    <location>
        <position position="206"/>
    </location>
</feature>
<feature type="glycosylation site" description="N-linked (GlcNAc...) asparagine" evidence="2">
    <location>
        <position position="260"/>
    </location>
</feature>
<feature type="glycosylation site" description="N-linked (GlcNAc...) asparagine" evidence="8">
    <location>
        <position position="275"/>
    </location>
</feature>
<feature type="glycosylation site" description="N-linked (GlcNAc...) asparagine" evidence="8 10">
    <location>
        <position position="397"/>
    </location>
</feature>
<feature type="glycosylation site" description="N-linked (GlcNAc...) asparagine" evidence="2">
    <location>
        <position position="455"/>
    </location>
</feature>
<feature type="glycosylation site" description="N-linked (GlcNAc...) asparagine" evidence="8">
    <location>
        <position position="559"/>
    </location>
</feature>
<feature type="glycosylation site" description="N-linked (GlcNAc...) asparagine" evidence="2">
    <location>
        <position position="638"/>
    </location>
</feature>
<feature type="disulfide bond" evidence="3">
    <location>
        <begin position="45"/>
        <end position="93"/>
    </location>
</feature>
<feature type="disulfide bond" evidence="3">
    <location>
        <begin position="142"/>
        <end position="192"/>
    </location>
</feature>
<feature type="disulfide bond" evidence="3">
    <location>
        <begin position="238"/>
        <end position="293"/>
    </location>
</feature>
<feature type="disulfide bond" evidence="3">
    <location>
        <begin position="335"/>
        <end position="383"/>
    </location>
</feature>
<feature type="disulfide bond" evidence="3">
    <location>
        <begin position="425"/>
        <end position="473"/>
    </location>
</feature>
<feature type="disulfide bond" evidence="3">
    <location>
        <begin position="516"/>
        <end position="562"/>
    </location>
</feature>
<feature type="disulfide bond" evidence="3">
    <location>
        <begin position="605"/>
        <end position="656"/>
    </location>
</feature>
<feature type="sequence conflict" description="In Ref. 4; BAC53806." evidence="12" ref="4">
    <original>L</original>
    <variation>R</variation>
    <location>
        <position position="818"/>
    </location>
</feature>
<sequence>MGARPLTLLRALLLPLLAGAQAAIVFIKEPSSQDALQGRRALLRCEVEAPDPVHVYWLLNGVPVQDTERRFAQGSSLSFAAVDRLQDSGAFQCVARDNVTGEEVRSTNASFNIKWIEAGPVVLKHPASEAEIQPQTQVTLRCHIDGHPRPTYQWFRDGTPLSDDQSTHTVSSRERNLTLRPASPEHSGLYSCCAHNAFGQACSSQNFTLSVADESFARVVLAPQDVVVARNEEAMFHCQFSAQPPPSLQWVFEDETPITNRSRPPHLRRAVVFANGSLLLTQVRPRNAGVYRCIGQGQRGPPIVLEATLHLAEIEDMLPFEPRVFIAGDEERVTCPAPQGLPTPSVWWEHAGVPLPAHGRVHQKGLELVFVTIAESDTGVYTCHASNLAGQRRQDVNITVATVPTWLRKPQDSQLEEGKPGYLHCLTQATPKPTVIWYRNQMLISEDSRFEVSKNGTLRINSVEVYDGTLYRCVSSTPAGSIEAQARVQVLEKLKFTPPPQPQQCMEFDKEATVPCSATGREKPTVKWVRADGSSLPEWVTDNAGTLHFARVTRDDAGNYTCIASNEPQGQIRAHVQLTVAVFITFKVEPERTTVYQGHTALLRCEAQGDPKPLIQWKGKDRILDPTKLGPRMHIFQNGSLVIHDVAPEDSGSYTCIAGNSCNIRHTEAPLLVVDKPVMEDSEGPGSPPPYKMIQTIGLSVGAAVAYIIAVLGLMFYCKKRCKAKRLQKQPEGEEPEMECLNGGPLQNGQPSAEIQEEVALTSLGSGPPATNKRHSAGDRMHFPRASLQPITTLGKSEFGEVFLAKAQGVEEGATETLVLVKSLQSRDEQQQLDFRREVEMFGKLNHANVVRLLGLCREAEPHYMVLEYVDLGDLKQFLRISKNKDEKLKSQPLSTKQKVALCSQVALGMEHLSNNRFVHKDLAARNCLISAQRQVKVSALGLSKDVYNSEYYHFRQAWVPLRWMSPEAVLEGDFSTKSDVWAFGVLMWEVFTHGEMPHGGQADDEVLADLQAGKARLPQPEGCPSKLYRLMQRCWAPNPKDRPSFSEIASTLGDSPADSKQ</sequence>
<evidence type="ECO:0000250" key="1"/>
<evidence type="ECO:0000255" key="2"/>
<evidence type="ECO:0000255" key="3">
    <source>
        <dbReference type="PROSITE-ProRule" id="PRU00114"/>
    </source>
</evidence>
<evidence type="ECO:0000255" key="4">
    <source>
        <dbReference type="PROSITE-ProRule" id="PRU00159"/>
    </source>
</evidence>
<evidence type="ECO:0000256" key="5">
    <source>
        <dbReference type="SAM" id="MobiDB-lite"/>
    </source>
</evidence>
<evidence type="ECO:0000269" key="6">
    <source>
    </source>
</evidence>
<evidence type="ECO:0000269" key="7">
    <source>
    </source>
</evidence>
<evidence type="ECO:0000269" key="8">
    <source>
    </source>
</evidence>
<evidence type="ECO:0000269" key="9">
    <source>
    </source>
</evidence>
<evidence type="ECO:0000269" key="10">
    <source>
    </source>
</evidence>
<evidence type="ECO:0000269" key="11">
    <source>
    </source>
</evidence>
<evidence type="ECO:0000305" key="12"/>
<evidence type="ECO:0007744" key="13">
    <source>
    </source>
</evidence>
<proteinExistence type="evidence at protein level"/>
<comment type="function">
    <text evidence="7 9 11">Inactive tyrosine kinase involved in Wnt signaling pathway. Component of both the non-canonical (also known as the Wnt/planar cell polarity signaling) and the canonical Wnt signaling pathway. Functions in cell adhesion, cell migration, cell polarity, proliferation, actin cytoskeleton reorganization and apoptosis. Has a role in embryogenesis, epithelial tissue organization and angiogenesis.</text>
</comment>
<comment type="subunit">
    <text evidence="1">Interacts with CTNNB1.</text>
</comment>
<comment type="subcellular location">
    <subcellularLocation>
        <location>Membrane</location>
        <topology>Single-pass type I membrane protein</topology>
    </subcellularLocation>
    <subcellularLocation>
        <location evidence="1">Cell junction</location>
    </subcellularLocation>
    <text>Colocalizes with MMP14 at cell junctions. Also localizes at the leading edge of migrating cells.</text>
</comment>
<comment type="tissue specificity">
    <text evidence="6">Expressed at high levels in lung and un-pregnant uterus among adult tissues, and in the tail, limbs, somites, gut and craniofacial regions among embryonic tissues.</text>
</comment>
<comment type="domain">
    <text>The protein kinase domain is predicted to be catalytically inactive.</text>
</comment>
<comment type="PTM">
    <text evidence="1">MMP14 cleaves PTK7 between Pro-613 and Leu-614 generating an N-terminal soluble (70 kDa) fragment and a membrane C-terminal (50 kDa) fragment. Proteolysis by MMP14 regulates PTK7 function in non-canonical Wnt signaling pathway.</text>
</comment>
<comment type="disruption phenotype">
    <text evidence="7 9 11">Mice die perinatally and display craniorachischisis, a severe form of neural tube defect in which the neural tube fails to close from the midbrain hindbrain boundary to the base of the spine. Chuzhoi mutants also display disruption of planar cell polarity in the inner ear, and defective heart and lung development.</text>
</comment>
<comment type="similarity">
    <text evidence="4">Belongs to the protein kinase superfamily. Tyr protein kinase family. Insulin receptor subfamily.</text>
</comment>
<comment type="sequence caution" evidence="12">
    <conflict type="erroneous initiation">
        <sequence resource="EMBL-CDS" id="AAH27800"/>
    </conflict>
</comment>
<name>PTK7_MOUSE</name>
<gene>
    <name type="primary">Ptk7</name>
</gene>
<accession>Q8BKG3</accession>
<accession>Q3V422</accession>
<accession>Q6W8S9</accession>
<accession>Q8CHK5</accession>
<accession>Q8K178</accession>
<reference key="1">
    <citation type="journal article" date="2004" name="Gene">
        <title>Cloning and characterization of the full-length mouse Ptk7 cDNA encoding a defective receptor protein tyrosine kinase.</title>
        <authorList>
            <person name="Jung J.-W."/>
            <person name="Shin W.S."/>
            <person name="Song J."/>
            <person name="Lee S.-T."/>
        </authorList>
    </citation>
    <scope>NUCLEOTIDE SEQUENCE [GENOMIC DNA / MRNA]</scope>
    <scope>TISSUE SPECIFICITY</scope>
    <source>
        <strain>BALB/cJ</strain>
        <strain>C57BL/6J</strain>
        <tissue>Liver</tissue>
    </source>
</reference>
<reference key="2">
    <citation type="journal article" date="2005" name="Science">
        <title>The transcriptional landscape of the mammalian genome.</title>
        <authorList>
            <person name="Carninci P."/>
            <person name="Kasukawa T."/>
            <person name="Katayama S."/>
            <person name="Gough J."/>
            <person name="Frith M.C."/>
            <person name="Maeda N."/>
            <person name="Oyama R."/>
            <person name="Ravasi T."/>
            <person name="Lenhard B."/>
            <person name="Wells C."/>
            <person name="Kodzius R."/>
            <person name="Shimokawa K."/>
            <person name="Bajic V.B."/>
            <person name="Brenner S.E."/>
            <person name="Batalov S."/>
            <person name="Forrest A.R."/>
            <person name="Zavolan M."/>
            <person name="Davis M.J."/>
            <person name="Wilming L.G."/>
            <person name="Aidinis V."/>
            <person name="Allen J.E."/>
            <person name="Ambesi-Impiombato A."/>
            <person name="Apweiler R."/>
            <person name="Aturaliya R.N."/>
            <person name="Bailey T.L."/>
            <person name="Bansal M."/>
            <person name="Baxter L."/>
            <person name="Beisel K.W."/>
            <person name="Bersano T."/>
            <person name="Bono H."/>
            <person name="Chalk A.M."/>
            <person name="Chiu K.P."/>
            <person name="Choudhary V."/>
            <person name="Christoffels A."/>
            <person name="Clutterbuck D.R."/>
            <person name="Crowe M.L."/>
            <person name="Dalla E."/>
            <person name="Dalrymple B.P."/>
            <person name="de Bono B."/>
            <person name="Della Gatta G."/>
            <person name="di Bernardo D."/>
            <person name="Down T."/>
            <person name="Engstrom P."/>
            <person name="Fagiolini M."/>
            <person name="Faulkner G."/>
            <person name="Fletcher C.F."/>
            <person name="Fukushima T."/>
            <person name="Furuno M."/>
            <person name="Futaki S."/>
            <person name="Gariboldi M."/>
            <person name="Georgii-Hemming P."/>
            <person name="Gingeras T.R."/>
            <person name="Gojobori T."/>
            <person name="Green R.E."/>
            <person name="Gustincich S."/>
            <person name="Harbers M."/>
            <person name="Hayashi Y."/>
            <person name="Hensch T.K."/>
            <person name="Hirokawa N."/>
            <person name="Hill D."/>
            <person name="Huminiecki L."/>
            <person name="Iacono M."/>
            <person name="Ikeo K."/>
            <person name="Iwama A."/>
            <person name="Ishikawa T."/>
            <person name="Jakt M."/>
            <person name="Kanapin A."/>
            <person name="Katoh M."/>
            <person name="Kawasawa Y."/>
            <person name="Kelso J."/>
            <person name="Kitamura H."/>
            <person name="Kitano H."/>
            <person name="Kollias G."/>
            <person name="Krishnan S.P."/>
            <person name="Kruger A."/>
            <person name="Kummerfeld S.K."/>
            <person name="Kurochkin I.V."/>
            <person name="Lareau L.F."/>
            <person name="Lazarevic D."/>
            <person name="Lipovich L."/>
            <person name="Liu J."/>
            <person name="Liuni S."/>
            <person name="McWilliam S."/>
            <person name="Madan Babu M."/>
            <person name="Madera M."/>
            <person name="Marchionni L."/>
            <person name="Matsuda H."/>
            <person name="Matsuzawa S."/>
            <person name="Miki H."/>
            <person name="Mignone F."/>
            <person name="Miyake S."/>
            <person name="Morris K."/>
            <person name="Mottagui-Tabar S."/>
            <person name="Mulder N."/>
            <person name="Nakano N."/>
            <person name="Nakauchi H."/>
            <person name="Ng P."/>
            <person name="Nilsson R."/>
            <person name="Nishiguchi S."/>
            <person name="Nishikawa S."/>
            <person name="Nori F."/>
            <person name="Ohara O."/>
            <person name="Okazaki Y."/>
            <person name="Orlando V."/>
            <person name="Pang K.C."/>
            <person name="Pavan W.J."/>
            <person name="Pavesi G."/>
            <person name="Pesole G."/>
            <person name="Petrovsky N."/>
            <person name="Piazza S."/>
            <person name="Reed J."/>
            <person name="Reid J.F."/>
            <person name="Ring B.Z."/>
            <person name="Ringwald M."/>
            <person name="Rost B."/>
            <person name="Ruan Y."/>
            <person name="Salzberg S.L."/>
            <person name="Sandelin A."/>
            <person name="Schneider C."/>
            <person name="Schoenbach C."/>
            <person name="Sekiguchi K."/>
            <person name="Semple C.A."/>
            <person name="Seno S."/>
            <person name="Sessa L."/>
            <person name="Sheng Y."/>
            <person name="Shibata Y."/>
            <person name="Shimada H."/>
            <person name="Shimada K."/>
            <person name="Silva D."/>
            <person name="Sinclair B."/>
            <person name="Sperling S."/>
            <person name="Stupka E."/>
            <person name="Sugiura K."/>
            <person name="Sultana R."/>
            <person name="Takenaka Y."/>
            <person name="Taki K."/>
            <person name="Tammoja K."/>
            <person name="Tan S.L."/>
            <person name="Tang S."/>
            <person name="Taylor M.S."/>
            <person name="Tegner J."/>
            <person name="Teichmann S.A."/>
            <person name="Ueda H.R."/>
            <person name="van Nimwegen E."/>
            <person name="Verardo R."/>
            <person name="Wei C.L."/>
            <person name="Yagi K."/>
            <person name="Yamanishi H."/>
            <person name="Zabarovsky E."/>
            <person name="Zhu S."/>
            <person name="Zimmer A."/>
            <person name="Hide W."/>
            <person name="Bult C."/>
            <person name="Grimmond S.M."/>
            <person name="Teasdale R.D."/>
            <person name="Liu E.T."/>
            <person name="Brusic V."/>
            <person name="Quackenbush J."/>
            <person name="Wahlestedt C."/>
            <person name="Mattick J.S."/>
            <person name="Hume D.A."/>
            <person name="Kai C."/>
            <person name="Sasaki D."/>
            <person name="Tomaru Y."/>
            <person name="Fukuda S."/>
            <person name="Kanamori-Katayama M."/>
            <person name="Suzuki M."/>
            <person name="Aoki J."/>
            <person name="Arakawa T."/>
            <person name="Iida J."/>
            <person name="Imamura K."/>
            <person name="Itoh M."/>
            <person name="Kato T."/>
            <person name="Kawaji H."/>
            <person name="Kawagashira N."/>
            <person name="Kawashima T."/>
            <person name="Kojima M."/>
            <person name="Kondo S."/>
            <person name="Konno H."/>
            <person name="Nakano K."/>
            <person name="Ninomiya N."/>
            <person name="Nishio T."/>
            <person name="Okada M."/>
            <person name="Plessy C."/>
            <person name="Shibata K."/>
            <person name="Shiraki T."/>
            <person name="Suzuki S."/>
            <person name="Tagami M."/>
            <person name="Waki K."/>
            <person name="Watahiki A."/>
            <person name="Okamura-Oho Y."/>
            <person name="Suzuki H."/>
            <person name="Kawai J."/>
            <person name="Hayashizaki Y."/>
        </authorList>
    </citation>
    <scope>NUCLEOTIDE SEQUENCE [LARGE SCALE MRNA]</scope>
    <source>
        <strain>C57BL/6J</strain>
        <tissue>Head</tissue>
        <tissue>Lung</tissue>
    </source>
</reference>
<reference key="3">
    <citation type="journal article" date="2004" name="Genome Res.">
        <title>The status, quality, and expansion of the NIH full-length cDNA project: the Mammalian Gene Collection (MGC).</title>
        <authorList>
            <consortium name="The MGC Project Team"/>
        </authorList>
    </citation>
    <scope>NUCLEOTIDE SEQUENCE [LARGE SCALE MRNA]</scope>
    <source>
        <strain>C57BL/6J</strain>
        <strain>FVB/N</strain>
        <tissue>Brain</tissue>
        <tissue>Mammary tumor</tissue>
    </source>
</reference>
<reference key="4">
    <citation type="submission" date="2001-02" db="EMBL/GenBank/DDBJ databases">
        <title>Isolation and characterization of novel human and mouse genes, which are expressed in the digestive tract.</title>
        <authorList>
            <person name="Daigo Y."/>
            <person name="Takayama I."/>
            <person name="Fujino M.A."/>
        </authorList>
    </citation>
    <scope>NUCLEOTIDE SEQUENCE [MRNA] OF 774-1062</scope>
    <source>
        <strain>W/Wv</strain>
    </source>
</reference>
<reference key="5">
    <citation type="journal article" date="2004" name="Nature">
        <title>PTK7/CCK-4 is a novel regulator of planar cell polarity in vertebrates.</title>
        <authorList>
            <person name="Lu X."/>
            <person name="Borchers A.G.M."/>
            <person name="Jolicoeur C."/>
            <person name="Rayburn H."/>
            <person name="Baker J.C."/>
            <person name="Tessier-Lavigne M."/>
        </authorList>
    </citation>
    <scope>FUNCTION</scope>
    <scope>DISRUPTION PHENOTYPE</scope>
</reference>
<reference key="6">
    <citation type="journal article" date="2009" name="Mol. Cell. Proteomics">
        <title>The mouse C2C12 myoblast cell surface N-linked glycoproteome: identification, glycosite occupancy, and membrane orientation.</title>
        <authorList>
            <person name="Gundry R.L."/>
            <person name="Raginski K."/>
            <person name="Tarasova Y."/>
            <person name="Tchernyshyov I."/>
            <person name="Bausch-Fluck D."/>
            <person name="Elliott S.T."/>
            <person name="Boheler K.R."/>
            <person name="Van Eyk J.E."/>
            <person name="Wollscheid B."/>
        </authorList>
    </citation>
    <scope>GLYCOSYLATION [LARGE SCALE ANALYSIS] AT ASN-108 AND ASN-397</scope>
    <source>
        <tissue>Myoblast</tissue>
    </source>
</reference>
<reference key="7">
    <citation type="journal article" date="2009" name="Nat. Biotechnol.">
        <title>Mass-spectrometric identification and relative quantification of N-linked cell surface glycoproteins.</title>
        <authorList>
            <person name="Wollscheid B."/>
            <person name="Bausch-Fluck D."/>
            <person name="Henderson C."/>
            <person name="O'Brien R."/>
            <person name="Bibel M."/>
            <person name="Schiess R."/>
            <person name="Aebersold R."/>
            <person name="Watts J.D."/>
        </authorList>
    </citation>
    <scope>GLYCOSYLATION [LARGE SCALE ANALYSIS] AT ASN-98; ASN-275; ASN-397 AND ASN-559</scope>
</reference>
<reference key="8">
    <citation type="journal article" date="2009" name="Development">
        <title>PTK7 is essential for polarized cell motility and convergent extension during mouse gastrulation.</title>
        <authorList>
            <person name="Yen W.W."/>
            <person name="Williams M."/>
            <person name="Periasamy A."/>
            <person name="Conaway M."/>
            <person name="Burdsal C."/>
            <person name="Keller R."/>
            <person name="Lu X."/>
            <person name="Sutherland A."/>
        </authorList>
    </citation>
    <scope>FUNCTION</scope>
    <scope>DISRUPTION PHENOTYPE</scope>
</reference>
<reference key="9">
    <citation type="journal article" date="2010" name="BMC Dev. Biol.">
        <title>The novel mouse mutant, chuzhoi, has disruption of Ptk7 protein and exhibits defects in neural tube, heart and lung development and abnormal planar cell polarity in the ear.</title>
        <authorList>
            <person name="Paudyal A."/>
            <person name="Damrau C."/>
            <person name="Patterson V.L."/>
            <person name="Ermakov A."/>
            <person name="Formstone C."/>
            <person name="Lalanne Z."/>
            <person name="Wells S."/>
            <person name="Lu X."/>
            <person name="Norris D.P."/>
            <person name="Dean C.H."/>
            <person name="Henderson D.J."/>
            <person name="Murdoch J.N."/>
        </authorList>
    </citation>
    <scope>FUNCTION</scope>
    <scope>DISRUPTION PHENOTYPE</scope>
</reference>
<reference key="10">
    <citation type="journal article" date="2010" name="Cell">
        <title>A tissue-specific atlas of mouse protein phosphorylation and expression.</title>
        <authorList>
            <person name="Huttlin E.L."/>
            <person name="Jedrychowski M.P."/>
            <person name="Elias J.E."/>
            <person name="Goswami T."/>
            <person name="Rad R."/>
            <person name="Beausoleil S.A."/>
            <person name="Villen J."/>
            <person name="Haas W."/>
            <person name="Sowa M.E."/>
            <person name="Gygi S.P."/>
        </authorList>
    </citation>
    <scope>PHOSPHORYLATION [LARGE SCALE ANALYSIS] AT SER-1056</scope>
    <scope>IDENTIFICATION BY MASS SPECTROMETRY [LARGE SCALE ANALYSIS]</scope>
    <source>
        <tissue>Brain</tissue>
        <tissue>Heart</tissue>
        <tissue>Kidney</tissue>
        <tissue>Lung</tissue>
        <tissue>Spleen</tissue>
        <tissue>Testis</tissue>
    </source>
</reference>